<sequence length="159" mass="17913">MNITIVSVGKLKEKYLKMGIDEYVKRLGGYAKIDLIEVADEKAPEQLSDAEMEIVKKKEGERILAKISTDTYVIALAINGKMKTSEQMAADLESLMTYGKSKIAFVIGGSLGLHEDVLKRADEQQSFGKMTLPHQLMKLVLVEQVYRSFRIMKGEPYHK</sequence>
<comment type="function">
    <text evidence="1">Specifically methylates the pseudouridine at position 1915 (m3Psi1915) in 23S rRNA.</text>
</comment>
<comment type="catalytic activity">
    <reaction evidence="1">
        <text>pseudouridine(1915) in 23S rRNA + S-adenosyl-L-methionine = N(3)-methylpseudouridine(1915) in 23S rRNA + S-adenosyl-L-homocysteine + H(+)</text>
        <dbReference type="Rhea" id="RHEA:42752"/>
        <dbReference type="Rhea" id="RHEA-COMP:10221"/>
        <dbReference type="Rhea" id="RHEA-COMP:10222"/>
        <dbReference type="ChEBI" id="CHEBI:15378"/>
        <dbReference type="ChEBI" id="CHEBI:57856"/>
        <dbReference type="ChEBI" id="CHEBI:59789"/>
        <dbReference type="ChEBI" id="CHEBI:65314"/>
        <dbReference type="ChEBI" id="CHEBI:74486"/>
        <dbReference type="EC" id="2.1.1.177"/>
    </reaction>
</comment>
<comment type="subunit">
    <text evidence="1">Homodimer.</text>
</comment>
<comment type="subcellular location">
    <subcellularLocation>
        <location evidence="1">Cytoplasm</location>
    </subcellularLocation>
</comment>
<comment type="similarity">
    <text evidence="1">Belongs to the RNA methyltransferase RlmH family.</text>
</comment>
<accession>B1HPJ4</accession>
<dbReference type="EC" id="2.1.1.177" evidence="1"/>
<dbReference type="EMBL" id="CP000817">
    <property type="protein sequence ID" value="ACA42196.1"/>
    <property type="molecule type" value="Genomic_DNA"/>
</dbReference>
<dbReference type="RefSeq" id="WP_012296196.1">
    <property type="nucleotide sequence ID" value="NC_010382.1"/>
</dbReference>
<dbReference type="SMR" id="B1HPJ4"/>
<dbReference type="EnsemblBacteria" id="ACA42196">
    <property type="protein sequence ID" value="ACA42196"/>
    <property type="gene ID" value="Bsph_4752"/>
</dbReference>
<dbReference type="KEGG" id="lsp:Bsph_4752"/>
<dbReference type="HOGENOM" id="CLU_100552_0_0_9"/>
<dbReference type="Proteomes" id="UP000002164">
    <property type="component" value="Chromosome"/>
</dbReference>
<dbReference type="GO" id="GO:0005737">
    <property type="term" value="C:cytoplasm"/>
    <property type="evidence" value="ECO:0007669"/>
    <property type="project" value="UniProtKB-SubCell"/>
</dbReference>
<dbReference type="GO" id="GO:0070038">
    <property type="term" value="F:rRNA (pseudouridine-N3-)-methyltransferase activity"/>
    <property type="evidence" value="ECO:0007669"/>
    <property type="project" value="UniProtKB-UniRule"/>
</dbReference>
<dbReference type="CDD" id="cd18081">
    <property type="entry name" value="RlmH-like"/>
    <property type="match status" value="1"/>
</dbReference>
<dbReference type="Gene3D" id="3.40.1280.10">
    <property type="match status" value="1"/>
</dbReference>
<dbReference type="HAMAP" id="MF_00658">
    <property type="entry name" value="23SrRNA_methyltr_H"/>
    <property type="match status" value="1"/>
</dbReference>
<dbReference type="InterPro" id="IPR029028">
    <property type="entry name" value="Alpha/beta_knot_MTases"/>
</dbReference>
<dbReference type="InterPro" id="IPR003742">
    <property type="entry name" value="RlmH-like"/>
</dbReference>
<dbReference type="InterPro" id="IPR029026">
    <property type="entry name" value="tRNA_m1G_MTases_N"/>
</dbReference>
<dbReference type="NCBIfam" id="NF000985">
    <property type="entry name" value="PRK00103.1-3"/>
    <property type="match status" value="1"/>
</dbReference>
<dbReference type="NCBIfam" id="TIGR00246">
    <property type="entry name" value="tRNA_RlmH_YbeA"/>
    <property type="match status" value="1"/>
</dbReference>
<dbReference type="PANTHER" id="PTHR33603">
    <property type="entry name" value="METHYLTRANSFERASE"/>
    <property type="match status" value="1"/>
</dbReference>
<dbReference type="PANTHER" id="PTHR33603:SF1">
    <property type="entry name" value="RIBOSOMAL RNA LARGE SUBUNIT METHYLTRANSFERASE H"/>
    <property type="match status" value="1"/>
</dbReference>
<dbReference type="Pfam" id="PF02590">
    <property type="entry name" value="SPOUT_MTase"/>
    <property type="match status" value="1"/>
</dbReference>
<dbReference type="PIRSF" id="PIRSF004505">
    <property type="entry name" value="MT_bac"/>
    <property type="match status" value="1"/>
</dbReference>
<dbReference type="SUPFAM" id="SSF75217">
    <property type="entry name" value="alpha/beta knot"/>
    <property type="match status" value="1"/>
</dbReference>
<reference key="1">
    <citation type="journal article" date="2008" name="J. Bacteriol.">
        <title>Complete genome sequence of the mosquitocidal bacterium Bacillus sphaericus C3-41 and comparison with those of closely related Bacillus species.</title>
        <authorList>
            <person name="Hu X."/>
            <person name="Fan W."/>
            <person name="Han B."/>
            <person name="Liu H."/>
            <person name="Zheng D."/>
            <person name="Li Q."/>
            <person name="Dong W."/>
            <person name="Yan J."/>
            <person name="Gao M."/>
            <person name="Berry C."/>
            <person name="Yuan Z."/>
        </authorList>
    </citation>
    <scope>NUCLEOTIDE SEQUENCE [LARGE SCALE GENOMIC DNA]</scope>
    <source>
        <strain>C3-41</strain>
    </source>
</reference>
<organism>
    <name type="scientific">Lysinibacillus sphaericus (strain C3-41)</name>
    <dbReference type="NCBI Taxonomy" id="444177"/>
    <lineage>
        <taxon>Bacteria</taxon>
        <taxon>Bacillati</taxon>
        <taxon>Bacillota</taxon>
        <taxon>Bacilli</taxon>
        <taxon>Bacillales</taxon>
        <taxon>Bacillaceae</taxon>
        <taxon>Lysinibacillus</taxon>
    </lineage>
</organism>
<feature type="chain" id="PRO_0000366618" description="Ribosomal RNA large subunit methyltransferase H">
    <location>
        <begin position="1"/>
        <end position="159"/>
    </location>
</feature>
<feature type="binding site" evidence="1">
    <location>
        <position position="76"/>
    </location>
    <ligand>
        <name>S-adenosyl-L-methionine</name>
        <dbReference type="ChEBI" id="CHEBI:59789"/>
    </ligand>
</feature>
<feature type="binding site" evidence="1">
    <location>
        <position position="108"/>
    </location>
    <ligand>
        <name>S-adenosyl-L-methionine</name>
        <dbReference type="ChEBI" id="CHEBI:59789"/>
    </ligand>
</feature>
<feature type="binding site" evidence="1">
    <location>
        <begin position="127"/>
        <end position="132"/>
    </location>
    <ligand>
        <name>S-adenosyl-L-methionine</name>
        <dbReference type="ChEBI" id="CHEBI:59789"/>
    </ligand>
</feature>
<name>RLMH_LYSSC</name>
<protein>
    <recommendedName>
        <fullName evidence="1">Ribosomal RNA large subunit methyltransferase H</fullName>
        <ecNumber evidence="1">2.1.1.177</ecNumber>
    </recommendedName>
    <alternativeName>
        <fullName evidence="1">23S rRNA (pseudouridine1915-N3)-methyltransferase</fullName>
    </alternativeName>
    <alternativeName>
        <fullName evidence="1">23S rRNA m3Psi1915 methyltransferase</fullName>
    </alternativeName>
    <alternativeName>
        <fullName evidence="1">rRNA (pseudouridine-N3-)-methyltransferase RlmH</fullName>
    </alternativeName>
</protein>
<keyword id="KW-0963">Cytoplasm</keyword>
<keyword id="KW-0489">Methyltransferase</keyword>
<keyword id="KW-0698">rRNA processing</keyword>
<keyword id="KW-0949">S-adenosyl-L-methionine</keyword>
<keyword id="KW-0808">Transferase</keyword>
<evidence type="ECO:0000255" key="1">
    <source>
        <dbReference type="HAMAP-Rule" id="MF_00658"/>
    </source>
</evidence>
<gene>
    <name evidence="1" type="primary">rlmH</name>
    <name type="ordered locus">Bsph_4752</name>
</gene>
<proteinExistence type="inferred from homology"/>